<evidence type="ECO:0000255" key="1">
    <source>
        <dbReference type="HAMAP-Rule" id="MF_00183"/>
    </source>
</evidence>
<accession>Q74BW4</accession>
<name>DXR_GEOSL</name>
<sequence>MKNITILGSTGSIGVSTLEVVSAHPDRFRVVALTAGNNLEMLRQQIETFRPQMVSVLSEKLAVELDRSLPGYKPEIHYGVEGLIAAATAGDAHMVVAAIVGAAGLVPTAAAIRAGKDVALANKETLVTAGRLIMDLVRDKNVRLYPVDSEHSAVFQSMEGQSRKDVLRIILTASGGPFLNLPLDQLSRVSIDDALNHPNWSMGRKITIDSATMMNKGLEVIEARWLFDTPAERIDVNIHPQSIIHSMVEYVDGSVMAQLGVPDMKAPIAYALTYPERVPTGVNPLDLTALSGLTFFKPDYRRFPALKLAYDALAAGESMPAVMNAANEVAVEAFLSGVIGFIDIAATIARIMDAHEAHTLSTIEEALITDRWAREKARELVGLVRR</sequence>
<reference key="1">
    <citation type="journal article" date="2003" name="Science">
        <title>Genome of Geobacter sulfurreducens: metal reduction in subsurface environments.</title>
        <authorList>
            <person name="Methe B.A."/>
            <person name="Nelson K.E."/>
            <person name="Eisen J.A."/>
            <person name="Paulsen I.T."/>
            <person name="Nelson W.C."/>
            <person name="Heidelberg J.F."/>
            <person name="Wu D."/>
            <person name="Wu M."/>
            <person name="Ward N.L."/>
            <person name="Beanan M.J."/>
            <person name="Dodson R.J."/>
            <person name="Madupu R."/>
            <person name="Brinkac L.M."/>
            <person name="Daugherty S.C."/>
            <person name="DeBoy R.T."/>
            <person name="Durkin A.S."/>
            <person name="Gwinn M.L."/>
            <person name="Kolonay J.F."/>
            <person name="Sullivan S.A."/>
            <person name="Haft D.H."/>
            <person name="Selengut J."/>
            <person name="Davidsen T.M."/>
            <person name="Zafar N."/>
            <person name="White O."/>
            <person name="Tran B."/>
            <person name="Romero C."/>
            <person name="Forberger H.A."/>
            <person name="Weidman J.F."/>
            <person name="Khouri H.M."/>
            <person name="Feldblyum T.V."/>
            <person name="Utterback T.R."/>
            <person name="Van Aken S.E."/>
            <person name="Lovley D.R."/>
            <person name="Fraser C.M."/>
        </authorList>
    </citation>
    <scope>NUCLEOTIDE SEQUENCE [LARGE SCALE GENOMIC DNA]</scope>
    <source>
        <strain>ATCC 51573 / DSM 12127 / PCA</strain>
    </source>
</reference>
<comment type="function">
    <text evidence="1">Catalyzes the NADPH-dependent rearrangement and reduction of 1-deoxy-D-xylulose-5-phosphate (DXP) to 2-C-methyl-D-erythritol 4-phosphate (MEP).</text>
</comment>
<comment type="catalytic activity">
    <reaction evidence="1">
        <text>2-C-methyl-D-erythritol 4-phosphate + NADP(+) = 1-deoxy-D-xylulose 5-phosphate + NADPH + H(+)</text>
        <dbReference type="Rhea" id="RHEA:13717"/>
        <dbReference type="ChEBI" id="CHEBI:15378"/>
        <dbReference type="ChEBI" id="CHEBI:57783"/>
        <dbReference type="ChEBI" id="CHEBI:57792"/>
        <dbReference type="ChEBI" id="CHEBI:58262"/>
        <dbReference type="ChEBI" id="CHEBI:58349"/>
        <dbReference type="EC" id="1.1.1.267"/>
    </reaction>
    <physiologicalReaction direction="right-to-left" evidence="1">
        <dbReference type="Rhea" id="RHEA:13719"/>
    </physiologicalReaction>
</comment>
<comment type="cofactor">
    <cofactor evidence="1">
        <name>Mg(2+)</name>
        <dbReference type="ChEBI" id="CHEBI:18420"/>
    </cofactor>
    <cofactor evidence="1">
        <name>Mn(2+)</name>
        <dbReference type="ChEBI" id="CHEBI:29035"/>
    </cofactor>
</comment>
<comment type="pathway">
    <text evidence="1">Isoprenoid biosynthesis; isopentenyl diphosphate biosynthesis via DXP pathway; isopentenyl diphosphate from 1-deoxy-D-xylulose 5-phosphate: step 1/6.</text>
</comment>
<comment type="similarity">
    <text evidence="1">Belongs to the DXR family.</text>
</comment>
<proteinExistence type="inferred from homology"/>
<organism>
    <name type="scientific">Geobacter sulfurreducens (strain ATCC 51573 / DSM 12127 / PCA)</name>
    <dbReference type="NCBI Taxonomy" id="243231"/>
    <lineage>
        <taxon>Bacteria</taxon>
        <taxon>Pseudomonadati</taxon>
        <taxon>Thermodesulfobacteriota</taxon>
        <taxon>Desulfuromonadia</taxon>
        <taxon>Geobacterales</taxon>
        <taxon>Geobacteraceae</taxon>
        <taxon>Geobacter</taxon>
    </lineage>
</organism>
<protein>
    <recommendedName>
        <fullName evidence="1">1-deoxy-D-xylulose 5-phosphate reductoisomerase</fullName>
        <shortName evidence="1">DXP reductoisomerase</shortName>
        <ecNumber evidence="1">1.1.1.267</ecNumber>
    </recommendedName>
    <alternativeName>
        <fullName evidence="1">1-deoxyxylulose-5-phosphate reductoisomerase</fullName>
    </alternativeName>
    <alternativeName>
        <fullName evidence="1">2-C-methyl-D-erythritol 4-phosphate synthase</fullName>
    </alternativeName>
</protein>
<gene>
    <name evidence="1" type="primary">dxr</name>
    <name type="ordered locus">GSU1915</name>
</gene>
<dbReference type="EC" id="1.1.1.267" evidence="1"/>
<dbReference type="EMBL" id="AE017180">
    <property type="protein sequence ID" value="AAR35291.1"/>
    <property type="molecule type" value="Genomic_DNA"/>
</dbReference>
<dbReference type="RefSeq" id="NP_952964.1">
    <property type="nucleotide sequence ID" value="NC_002939.5"/>
</dbReference>
<dbReference type="RefSeq" id="WP_010942560.1">
    <property type="nucleotide sequence ID" value="NC_002939.5"/>
</dbReference>
<dbReference type="SMR" id="Q74BW4"/>
<dbReference type="FunCoup" id="Q74BW4">
    <property type="interactions" value="376"/>
</dbReference>
<dbReference type="STRING" id="243231.GSU1915"/>
<dbReference type="EnsemblBacteria" id="AAR35291">
    <property type="protein sequence ID" value="AAR35291"/>
    <property type="gene ID" value="GSU1915"/>
</dbReference>
<dbReference type="KEGG" id="gsu:GSU1915"/>
<dbReference type="PATRIC" id="fig|243231.5.peg.1953"/>
<dbReference type="eggNOG" id="COG0743">
    <property type="taxonomic scope" value="Bacteria"/>
</dbReference>
<dbReference type="HOGENOM" id="CLU_035714_4_0_7"/>
<dbReference type="InParanoid" id="Q74BW4"/>
<dbReference type="OrthoDB" id="9806546at2"/>
<dbReference type="UniPathway" id="UPA00056">
    <property type="reaction ID" value="UER00092"/>
</dbReference>
<dbReference type="Proteomes" id="UP000000577">
    <property type="component" value="Chromosome"/>
</dbReference>
<dbReference type="GO" id="GO:0030604">
    <property type="term" value="F:1-deoxy-D-xylulose-5-phosphate reductoisomerase activity"/>
    <property type="evidence" value="ECO:0000318"/>
    <property type="project" value="GO_Central"/>
</dbReference>
<dbReference type="GO" id="GO:0030145">
    <property type="term" value="F:manganese ion binding"/>
    <property type="evidence" value="ECO:0000318"/>
    <property type="project" value="GO_Central"/>
</dbReference>
<dbReference type="GO" id="GO:0070402">
    <property type="term" value="F:NADPH binding"/>
    <property type="evidence" value="ECO:0000318"/>
    <property type="project" value="GO_Central"/>
</dbReference>
<dbReference type="GO" id="GO:0051484">
    <property type="term" value="P:isopentenyl diphosphate biosynthetic process, methylerythritol 4-phosphate pathway involved in terpenoid biosynthetic process"/>
    <property type="evidence" value="ECO:0000318"/>
    <property type="project" value="GO_Central"/>
</dbReference>
<dbReference type="FunFam" id="1.10.1740.10:FF:000004">
    <property type="entry name" value="1-deoxy-D-xylulose 5-phosphate reductoisomerase"/>
    <property type="match status" value="1"/>
</dbReference>
<dbReference type="FunFam" id="3.40.50.720:FF:000045">
    <property type="entry name" value="1-deoxy-D-xylulose 5-phosphate reductoisomerase"/>
    <property type="match status" value="1"/>
</dbReference>
<dbReference type="Gene3D" id="1.10.1740.10">
    <property type="match status" value="1"/>
</dbReference>
<dbReference type="Gene3D" id="3.40.50.720">
    <property type="entry name" value="NAD(P)-binding Rossmann-like Domain"/>
    <property type="match status" value="1"/>
</dbReference>
<dbReference type="HAMAP" id="MF_00183">
    <property type="entry name" value="DXP_reductoisom"/>
    <property type="match status" value="1"/>
</dbReference>
<dbReference type="InterPro" id="IPR003821">
    <property type="entry name" value="DXP_reductoisomerase"/>
</dbReference>
<dbReference type="InterPro" id="IPR013644">
    <property type="entry name" value="DXP_reductoisomerase_C"/>
</dbReference>
<dbReference type="InterPro" id="IPR013512">
    <property type="entry name" value="DXP_reductoisomerase_N"/>
</dbReference>
<dbReference type="InterPro" id="IPR026877">
    <property type="entry name" value="DXPR_C"/>
</dbReference>
<dbReference type="InterPro" id="IPR036169">
    <property type="entry name" value="DXPR_C_sf"/>
</dbReference>
<dbReference type="InterPro" id="IPR036291">
    <property type="entry name" value="NAD(P)-bd_dom_sf"/>
</dbReference>
<dbReference type="NCBIfam" id="TIGR00243">
    <property type="entry name" value="Dxr"/>
    <property type="match status" value="1"/>
</dbReference>
<dbReference type="NCBIfam" id="NF009114">
    <property type="entry name" value="PRK12464.1"/>
    <property type="match status" value="1"/>
</dbReference>
<dbReference type="PANTHER" id="PTHR30525">
    <property type="entry name" value="1-DEOXY-D-XYLULOSE 5-PHOSPHATE REDUCTOISOMERASE"/>
    <property type="match status" value="1"/>
</dbReference>
<dbReference type="PANTHER" id="PTHR30525:SF0">
    <property type="entry name" value="1-DEOXY-D-XYLULOSE 5-PHOSPHATE REDUCTOISOMERASE, CHLOROPLASTIC"/>
    <property type="match status" value="1"/>
</dbReference>
<dbReference type="Pfam" id="PF08436">
    <property type="entry name" value="DXP_redisom_C"/>
    <property type="match status" value="1"/>
</dbReference>
<dbReference type="Pfam" id="PF02670">
    <property type="entry name" value="DXP_reductoisom"/>
    <property type="match status" value="1"/>
</dbReference>
<dbReference type="Pfam" id="PF13288">
    <property type="entry name" value="DXPR_C"/>
    <property type="match status" value="1"/>
</dbReference>
<dbReference type="PIRSF" id="PIRSF006205">
    <property type="entry name" value="Dxp_reductismrs"/>
    <property type="match status" value="1"/>
</dbReference>
<dbReference type="SUPFAM" id="SSF69055">
    <property type="entry name" value="1-deoxy-D-xylulose-5-phosphate reductoisomerase, C-terminal domain"/>
    <property type="match status" value="1"/>
</dbReference>
<dbReference type="SUPFAM" id="SSF55347">
    <property type="entry name" value="Glyceraldehyde-3-phosphate dehydrogenase-like, C-terminal domain"/>
    <property type="match status" value="1"/>
</dbReference>
<dbReference type="SUPFAM" id="SSF51735">
    <property type="entry name" value="NAD(P)-binding Rossmann-fold domains"/>
    <property type="match status" value="1"/>
</dbReference>
<keyword id="KW-0414">Isoprene biosynthesis</keyword>
<keyword id="KW-0464">Manganese</keyword>
<keyword id="KW-0479">Metal-binding</keyword>
<keyword id="KW-0521">NADP</keyword>
<keyword id="KW-0560">Oxidoreductase</keyword>
<keyword id="KW-1185">Reference proteome</keyword>
<feature type="chain" id="PRO_0000163656" description="1-deoxy-D-xylulose 5-phosphate reductoisomerase">
    <location>
        <begin position="1"/>
        <end position="386"/>
    </location>
</feature>
<feature type="binding site" evidence="1">
    <location>
        <position position="10"/>
    </location>
    <ligand>
        <name>NADPH</name>
        <dbReference type="ChEBI" id="CHEBI:57783"/>
    </ligand>
</feature>
<feature type="binding site" evidence="1">
    <location>
        <position position="11"/>
    </location>
    <ligand>
        <name>NADPH</name>
        <dbReference type="ChEBI" id="CHEBI:57783"/>
    </ligand>
</feature>
<feature type="binding site" evidence="1">
    <location>
        <position position="12"/>
    </location>
    <ligand>
        <name>NADPH</name>
        <dbReference type="ChEBI" id="CHEBI:57783"/>
    </ligand>
</feature>
<feature type="binding site" evidence="1">
    <location>
        <position position="13"/>
    </location>
    <ligand>
        <name>NADPH</name>
        <dbReference type="ChEBI" id="CHEBI:57783"/>
    </ligand>
</feature>
<feature type="binding site" evidence="1">
    <location>
        <position position="36"/>
    </location>
    <ligand>
        <name>NADPH</name>
        <dbReference type="ChEBI" id="CHEBI:57783"/>
    </ligand>
</feature>
<feature type="binding site" evidence="1">
    <location>
        <position position="38"/>
    </location>
    <ligand>
        <name>NADPH</name>
        <dbReference type="ChEBI" id="CHEBI:57783"/>
    </ligand>
</feature>
<feature type="binding site" evidence="1">
    <location>
        <position position="122"/>
    </location>
    <ligand>
        <name>NADPH</name>
        <dbReference type="ChEBI" id="CHEBI:57783"/>
    </ligand>
</feature>
<feature type="binding site" evidence="1">
    <location>
        <position position="123"/>
    </location>
    <ligand>
        <name>1-deoxy-D-xylulose 5-phosphate</name>
        <dbReference type="ChEBI" id="CHEBI:57792"/>
    </ligand>
</feature>
<feature type="binding site" evidence="1">
    <location>
        <position position="124"/>
    </location>
    <ligand>
        <name>NADPH</name>
        <dbReference type="ChEBI" id="CHEBI:57783"/>
    </ligand>
</feature>
<feature type="binding site" evidence="1">
    <location>
        <position position="148"/>
    </location>
    <ligand>
        <name>Mn(2+)</name>
        <dbReference type="ChEBI" id="CHEBI:29035"/>
    </ligand>
</feature>
<feature type="binding site" evidence="1">
    <location>
        <position position="149"/>
    </location>
    <ligand>
        <name>1-deoxy-D-xylulose 5-phosphate</name>
        <dbReference type="ChEBI" id="CHEBI:57792"/>
    </ligand>
</feature>
<feature type="binding site" evidence="1">
    <location>
        <position position="150"/>
    </location>
    <ligand>
        <name>1-deoxy-D-xylulose 5-phosphate</name>
        <dbReference type="ChEBI" id="CHEBI:57792"/>
    </ligand>
</feature>
<feature type="binding site" evidence="1">
    <location>
        <position position="150"/>
    </location>
    <ligand>
        <name>Mn(2+)</name>
        <dbReference type="ChEBI" id="CHEBI:29035"/>
    </ligand>
</feature>
<feature type="binding site" evidence="1">
    <location>
        <position position="174"/>
    </location>
    <ligand>
        <name>1-deoxy-D-xylulose 5-phosphate</name>
        <dbReference type="ChEBI" id="CHEBI:57792"/>
    </ligand>
</feature>
<feature type="binding site" evidence="1">
    <location>
        <position position="197"/>
    </location>
    <ligand>
        <name>1-deoxy-D-xylulose 5-phosphate</name>
        <dbReference type="ChEBI" id="CHEBI:57792"/>
    </ligand>
</feature>
<feature type="binding site" evidence="1">
    <location>
        <position position="203"/>
    </location>
    <ligand>
        <name>NADPH</name>
        <dbReference type="ChEBI" id="CHEBI:57783"/>
    </ligand>
</feature>
<feature type="binding site" evidence="1">
    <location>
        <position position="210"/>
    </location>
    <ligand>
        <name>1-deoxy-D-xylulose 5-phosphate</name>
        <dbReference type="ChEBI" id="CHEBI:57792"/>
    </ligand>
</feature>
<feature type="binding site" evidence="1">
    <location>
        <position position="215"/>
    </location>
    <ligand>
        <name>1-deoxy-D-xylulose 5-phosphate</name>
        <dbReference type="ChEBI" id="CHEBI:57792"/>
    </ligand>
</feature>
<feature type="binding site" evidence="1">
    <location>
        <position position="216"/>
    </location>
    <ligand>
        <name>1-deoxy-D-xylulose 5-phosphate</name>
        <dbReference type="ChEBI" id="CHEBI:57792"/>
    </ligand>
</feature>
<feature type="binding site" evidence="1">
    <location>
        <position position="219"/>
    </location>
    <ligand>
        <name>1-deoxy-D-xylulose 5-phosphate</name>
        <dbReference type="ChEBI" id="CHEBI:57792"/>
    </ligand>
</feature>
<feature type="binding site" evidence="1">
    <location>
        <position position="219"/>
    </location>
    <ligand>
        <name>Mn(2+)</name>
        <dbReference type="ChEBI" id="CHEBI:29035"/>
    </ligand>
</feature>